<gene>
    <name evidence="1" type="primary">rnc</name>
    <name type="ordered locus">TWT_562</name>
</gene>
<proteinExistence type="inferred from homology"/>
<evidence type="ECO:0000255" key="1">
    <source>
        <dbReference type="HAMAP-Rule" id="MF_00104"/>
    </source>
</evidence>
<sequence length="223" mass="24267">MDGVDELLLRKFNLTLPPGLLRTAFVHKSFSFENGACQNNERLEFLGDAVLGLVVSHYLFETCPEYTEGQLSAARSYIVSGTSIAQIAKELNLGQFMLLGKGEKLAGGMDKTSLLADLLESLIGAVMVDQGFESARDFVLALVGEKLRQVGEFSVDDPKTKLQKLTRTQLVYEVVTEGPPHSRTFKASVIVNEKRFFGQGSSKKQAQVAAAMSALASLENKSS</sequence>
<accession>Q83FY2</accession>
<comment type="function">
    <text evidence="1">Digests double-stranded RNA. Involved in the processing of primary rRNA transcript to yield the immediate precursors to the large and small rRNAs (23S and 16S). Processes some mRNAs, and tRNAs when they are encoded in the rRNA operon. Processes pre-crRNA and tracrRNA of type II CRISPR loci if present in the organism.</text>
</comment>
<comment type="catalytic activity">
    <reaction evidence="1">
        <text>Endonucleolytic cleavage to 5'-phosphomonoester.</text>
        <dbReference type="EC" id="3.1.26.3"/>
    </reaction>
</comment>
<comment type="cofactor">
    <cofactor evidence="1">
        <name>Mg(2+)</name>
        <dbReference type="ChEBI" id="CHEBI:18420"/>
    </cofactor>
</comment>
<comment type="subunit">
    <text evidence="1">Homodimer.</text>
</comment>
<comment type="subcellular location">
    <subcellularLocation>
        <location evidence="1">Cytoplasm</location>
    </subcellularLocation>
</comment>
<comment type="similarity">
    <text evidence="1">Belongs to the ribonuclease III family.</text>
</comment>
<feature type="chain" id="PRO_0000228600" description="Ribonuclease 3">
    <location>
        <begin position="1"/>
        <end position="223"/>
    </location>
</feature>
<feature type="domain" description="RNase III" evidence="1">
    <location>
        <begin position="1"/>
        <end position="131"/>
    </location>
</feature>
<feature type="domain" description="DRBM" evidence="1">
    <location>
        <begin position="157"/>
        <end position="220"/>
    </location>
</feature>
<feature type="active site" evidence="1">
    <location>
        <position position="48"/>
    </location>
</feature>
<feature type="active site" evidence="1">
    <location>
        <position position="120"/>
    </location>
</feature>
<feature type="binding site" evidence="1">
    <location>
        <position position="44"/>
    </location>
    <ligand>
        <name>Mg(2+)</name>
        <dbReference type="ChEBI" id="CHEBI:18420"/>
    </ligand>
</feature>
<feature type="binding site" evidence="1">
    <location>
        <position position="117"/>
    </location>
    <ligand>
        <name>Mg(2+)</name>
        <dbReference type="ChEBI" id="CHEBI:18420"/>
    </ligand>
</feature>
<feature type="binding site" evidence="1">
    <location>
        <position position="120"/>
    </location>
    <ligand>
        <name>Mg(2+)</name>
        <dbReference type="ChEBI" id="CHEBI:18420"/>
    </ligand>
</feature>
<reference key="1">
    <citation type="journal article" date="2003" name="Genome Res.">
        <title>Tropheryma whipplei twist: a human pathogenic Actinobacteria with a reduced genome.</title>
        <authorList>
            <person name="Raoult D."/>
            <person name="Ogata H."/>
            <person name="Audic S."/>
            <person name="Robert C."/>
            <person name="Suhre K."/>
            <person name="Drancourt M."/>
            <person name="Claverie J.-M."/>
        </authorList>
    </citation>
    <scope>NUCLEOTIDE SEQUENCE [LARGE SCALE GENOMIC DNA]</scope>
    <source>
        <strain>Twist</strain>
    </source>
</reference>
<keyword id="KW-0963">Cytoplasm</keyword>
<keyword id="KW-0255">Endonuclease</keyword>
<keyword id="KW-0378">Hydrolase</keyword>
<keyword id="KW-0460">Magnesium</keyword>
<keyword id="KW-0479">Metal-binding</keyword>
<keyword id="KW-0507">mRNA processing</keyword>
<keyword id="KW-0540">Nuclease</keyword>
<keyword id="KW-1185">Reference proteome</keyword>
<keyword id="KW-0694">RNA-binding</keyword>
<keyword id="KW-0698">rRNA processing</keyword>
<keyword id="KW-0699">rRNA-binding</keyword>
<keyword id="KW-0819">tRNA processing</keyword>
<dbReference type="EC" id="3.1.26.3" evidence="1"/>
<dbReference type="EMBL" id="AE014184">
    <property type="protein sequence ID" value="AAO44659.1"/>
    <property type="molecule type" value="Genomic_DNA"/>
</dbReference>
<dbReference type="RefSeq" id="WP_011102645.1">
    <property type="nucleotide sequence ID" value="NC_004572.3"/>
</dbReference>
<dbReference type="SMR" id="Q83FY2"/>
<dbReference type="STRING" id="203267.TWT_562"/>
<dbReference type="GeneID" id="67387975"/>
<dbReference type="KEGG" id="twh:TWT_562"/>
<dbReference type="eggNOG" id="COG0571">
    <property type="taxonomic scope" value="Bacteria"/>
</dbReference>
<dbReference type="HOGENOM" id="CLU_000907_1_3_11"/>
<dbReference type="OrthoDB" id="9805026at2"/>
<dbReference type="Proteomes" id="UP000002200">
    <property type="component" value="Chromosome"/>
</dbReference>
<dbReference type="GO" id="GO:0005737">
    <property type="term" value="C:cytoplasm"/>
    <property type="evidence" value="ECO:0007669"/>
    <property type="project" value="UniProtKB-SubCell"/>
</dbReference>
<dbReference type="GO" id="GO:0003725">
    <property type="term" value="F:double-stranded RNA binding"/>
    <property type="evidence" value="ECO:0007669"/>
    <property type="project" value="TreeGrafter"/>
</dbReference>
<dbReference type="GO" id="GO:0046872">
    <property type="term" value="F:metal ion binding"/>
    <property type="evidence" value="ECO:0007669"/>
    <property type="project" value="UniProtKB-KW"/>
</dbReference>
<dbReference type="GO" id="GO:0004525">
    <property type="term" value="F:ribonuclease III activity"/>
    <property type="evidence" value="ECO:0007669"/>
    <property type="project" value="UniProtKB-UniRule"/>
</dbReference>
<dbReference type="GO" id="GO:0019843">
    <property type="term" value="F:rRNA binding"/>
    <property type="evidence" value="ECO:0007669"/>
    <property type="project" value="UniProtKB-KW"/>
</dbReference>
<dbReference type="GO" id="GO:0006397">
    <property type="term" value="P:mRNA processing"/>
    <property type="evidence" value="ECO:0007669"/>
    <property type="project" value="UniProtKB-UniRule"/>
</dbReference>
<dbReference type="GO" id="GO:0010468">
    <property type="term" value="P:regulation of gene expression"/>
    <property type="evidence" value="ECO:0007669"/>
    <property type="project" value="TreeGrafter"/>
</dbReference>
<dbReference type="GO" id="GO:0006364">
    <property type="term" value="P:rRNA processing"/>
    <property type="evidence" value="ECO:0007669"/>
    <property type="project" value="UniProtKB-UniRule"/>
</dbReference>
<dbReference type="GO" id="GO:0008033">
    <property type="term" value="P:tRNA processing"/>
    <property type="evidence" value="ECO:0007669"/>
    <property type="project" value="UniProtKB-KW"/>
</dbReference>
<dbReference type="CDD" id="cd10845">
    <property type="entry name" value="DSRM_RNAse_III_family"/>
    <property type="match status" value="1"/>
</dbReference>
<dbReference type="CDD" id="cd00593">
    <property type="entry name" value="RIBOc"/>
    <property type="match status" value="1"/>
</dbReference>
<dbReference type="FunFam" id="1.10.1520.10:FF:000001">
    <property type="entry name" value="Ribonuclease 3"/>
    <property type="match status" value="1"/>
</dbReference>
<dbReference type="Gene3D" id="3.30.160.20">
    <property type="match status" value="1"/>
</dbReference>
<dbReference type="Gene3D" id="1.10.1520.10">
    <property type="entry name" value="Ribonuclease III domain"/>
    <property type="match status" value="1"/>
</dbReference>
<dbReference type="HAMAP" id="MF_00104">
    <property type="entry name" value="RNase_III"/>
    <property type="match status" value="1"/>
</dbReference>
<dbReference type="InterPro" id="IPR014720">
    <property type="entry name" value="dsRBD_dom"/>
</dbReference>
<dbReference type="InterPro" id="IPR011907">
    <property type="entry name" value="RNase_III"/>
</dbReference>
<dbReference type="InterPro" id="IPR000999">
    <property type="entry name" value="RNase_III_dom"/>
</dbReference>
<dbReference type="InterPro" id="IPR036389">
    <property type="entry name" value="RNase_III_sf"/>
</dbReference>
<dbReference type="NCBIfam" id="TIGR02191">
    <property type="entry name" value="RNaseIII"/>
    <property type="match status" value="1"/>
</dbReference>
<dbReference type="PANTHER" id="PTHR11207:SF0">
    <property type="entry name" value="RIBONUCLEASE 3"/>
    <property type="match status" value="1"/>
</dbReference>
<dbReference type="PANTHER" id="PTHR11207">
    <property type="entry name" value="RIBONUCLEASE III"/>
    <property type="match status" value="1"/>
</dbReference>
<dbReference type="Pfam" id="PF00035">
    <property type="entry name" value="dsrm"/>
    <property type="match status" value="1"/>
</dbReference>
<dbReference type="Pfam" id="PF14622">
    <property type="entry name" value="Ribonucleas_3_3"/>
    <property type="match status" value="1"/>
</dbReference>
<dbReference type="SMART" id="SM00358">
    <property type="entry name" value="DSRM"/>
    <property type="match status" value="1"/>
</dbReference>
<dbReference type="SMART" id="SM00535">
    <property type="entry name" value="RIBOc"/>
    <property type="match status" value="1"/>
</dbReference>
<dbReference type="SUPFAM" id="SSF54768">
    <property type="entry name" value="dsRNA-binding domain-like"/>
    <property type="match status" value="1"/>
</dbReference>
<dbReference type="SUPFAM" id="SSF69065">
    <property type="entry name" value="RNase III domain-like"/>
    <property type="match status" value="1"/>
</dbReference>
<dbReference type="PROSITE" id="PS50137">
    <property type="entry name" value="DS_RBD"/>
    <property type="match status" value="1"/>
</dbReference>
<dbReference type="PROSITE" id="PS00517">
    <property type="entry name" value="RNASE_3_1"/>
    <property type="match status" value="1"/>
</dbReference>
<dbReference type="PROSITE" id="PS50142">
    <property type="entry name" value="RNASE_3_2"/>
    <property type="match status" value="1"/>
</dbReference>
<protein>
    <recommendedName>
        <fullName evidence="1">Ribonuclease 3</fullName>
        <ecNumber evidence="1">3.1.26.3</ecNumber>
    </recommendedName>
    <alternativeName>
        <fullName evidence="1">Ribonuclease III</fullName>
        <shortName evidence="1">RNase III</shortName>
    </alternativeName>
</protein>
<organism>
    <name type="scientific">Tropheryma whipplei (strain Twist)</name>
    <name type="common">Whipple's bacillus</name>
    <dbReference type="NCBI Taxonomy" id="203267"/>
    <lineage>
        <taxon>Bacteria</taxon>
        <taxon>Bacillati</taxon>
        <taxon>Actinomycetota</taxon>
        <taxon>Actinomycetes</taxon>
        <taxon>Micrococcales</taxon>
        <taxon>Tropherymataceae</taxon>
        <taxon>Tropheryma</taxon>
    </lineage>
</organism>
<name>RNC_TROWT</name>